<protein>
    <recommendedName>
        <fullName evidence="1">Cardiolipin synthase</fullName>
        <shortName evidence="1">CL synthase</shortName>
        <ecNumber evidence="1">2.7.8.-</ecNumber>
    </recommendedName>
</protein>
<accession>P0C2E2</accession>
<accession>Q9ZNC6</accession>
<organism>
    <name type="scientific">Clostridium perfringens (strain 13 / Type A)</name>
    <dbReference type="NCBI Taxonomy" id="195102"/>
    <lineage>
        <taxon>Bacteria</taxon>
        <taxon>Bacillati</taxon>
        <taxon>Bacillota</taxon>
        <taxon>Clostridia</taxon>
        <taxon>Eubacteriales</taxon>
        <taxon>Clostridiaceae</taxon>
        <taxon>Clostridium</taxon>
    </lineage>
</organism>
<sequence>MHLFINMIFLINIVFIISIIFIERRNPQTTWAWILILTFLPILGFIIYILFGQNITREKNFKRKILDDKTKQKYLNSFKSHYKLDNISLKYKDLIMMNFNNDNSTYTQRNDIDLYFDANSLFEEMIDEINKAEKFIHMEFYIFKSDEIGKKILQALTKKAKEGVEVKLLVDSIGNSIHKKDIDKLKAAGGDFKIFFPGFCKYINLRINYRNHRKILIIDSKVAFLGGFNIGDEYLGKDKNIGHWRDTHTKIKGLAINDLEGRFLLDWSYANESDLDIDLKKYFINPHSTDLPKKIIGAQIVSSGPDHTEQQIKNGYFKIINSAKKNLFIQTPYFVPDEPMLEALRLAALSGVDVKIMLPGNPDHKFMGWIANSYFESLLNAGAKIYLYEKGFLHAKTIVADSSICSVGTANMDIRSFSLNFESNIFIYNEAISKSMEEQFFKDLKVCTKVTLESFEKRSIISRIGESITRLVSPLM</sequence>
<evidence type="ECO:0000255" key="1">
    <source>
        <dbReference type="HAMAP-Rule" id="MF_01916"/>
    </source>
</evidence>
<comment type="function">
    <text evidence="1">Catalyzes the reversible phosphatidyl group transfer from one phosphatidylglycerol molecule to another to form cardiolipin (CL) (diphosphatidylglycerol) and glycerol.</text>
</comment>
<comment type="catalytic activity">
    <reaction evidence="1">
        <text>2 a 1,2-diacyl-sn-glycero-3-phospho-(1'-sn-glycerol) = a cardiolipin + glycerol</text>
        <dbReference type="Rhea" id="RHEA:31451"/>
        <dbReference type="ChEBI" id="CHEBI:17754"/>
        <dbReference type="ChEBI" id="CHEBI:62237"/>
        <dbReference type="ChEBI" id="CHEBI:64716"/>
    </reaction>
</comment>
<comment type="subcellular location">
    <subcellularLocation>
        <location evidence="1">Cell membrane</location>
        <topology evidence="1">Multi-pass membrane protein</topology>
    </subcellularLocation>
</comment>
<comment type="similarity">
    <text evidence="1">Belongs to the phospholipase D family. Cardiolipin synthase subfamily.</text>
</comment>
<gene>
    <name type="primary">cls</name>
    <name type="synonym">clsD</name>
    <name type="ordered locus">CPE1430</name>
</gene>
<reference key="1">
    <citation type="journal article" date="2002" name="Proc. Natl. Acad. Sci. U.S.A.">
        <title>Complete genome sequence of Clostridium perfringens, an anaerobic flesh-eater.</title>
        <authorList>
            <person name="Shimizu T."/>
            <person name="Ohtani K."/>
            <person name="Hirakawa H."/>
            <person name="Ohshima K."/>
            <person name="Yamashita A."/>
            <person name="Shiba T."/>
            <person name="Ogasawara N."/>
            <person name="Hattori M."/>
            <person name="Kuhara S."/>
            <person name="Hayashi H."/>
        </authorList>
    </citation>
    <scope>NUCLEOTIDE SEQUENCE [LARGE SCALE GENOMIC DNA]</scope>
    <source>
        <strain>13 / Type A</strain>
    </source>
</reference>
<proteinExistence type="inferred from homology"/>
<keyword id="KW-1003">Cell membrane</keyword>
<keyword id="KW-0444">Lipid biosynthesis</keyword>
<keyword id="KW-0443">Lipid metabolism</keyword>
<keyword id="KW-0472">Membrane</keyword>
<keyword id="KW-0594">Phospholipid biosynthesis</keyword>
<keyword id="KW-1208">Phospholipid metabolism</keyword>
<keyword id="KW-1185">Reference proteome</keyword>
<keyword id="KW-0677">Repeat</keyword>
<keyword id="KW-0808">Transferase</keyword>
<keyword id="KW-0812">Transmembrane</keyword>
<keyword id="KW-1133">Transmembrane helix</keyword>
<feature type="chain" id="PRO_0000201252" description="Cardiolipin synthase">
    <location>
        <begin position="1"/>
        <end position="476"/>
    </location>
</feature>
<feature type="transmembrane region" description="Helical" evidence="1">
    <location>
        <begin position="2"/>
        <end position="22"/>
    </location>
</feature>
<feature type="transmembrane region" description="Helical" evidence="1">
    <location>
        <begin position="31"/>
        <end position="51"/>
    </location>
</feature>
<feature type="domain" description="PLD phosphodiesterase 1" evidence="1">
    <location>
        <begin position="207"/>
        <end position="234"/>
    </location>
</feature>
<feature type="domain" description="PLD phosphodiesterase 2" evidence="1">
    <location>
        <begin position="389"/>
        <end position="416"/>
    </location>
</feature>
<feature type="active site" evidence="1">
    <location>
        <position position="212"/>
    </location>
</feature>
<feature type="active site" evidence="1">
    <location>
        <position position="214"/>
    </location>
</feature>
<feature type="active site" evidence="1">
    <location>
        <position position="219"/>
    </location>
</feature>
<feature type="active site" evidence="1">
    <location>
        <position position="394"/>
    </location>
</feature>
<feature type="active site" evidence="1">
    <location>
        <position position="396"/>
    </location>
</feature>
<feature type="active site" evidence="1">
    <location>
        <position position="401"/>
    </location>
</feature>
<name>CLS_CLOPE</name>
<dbReference type="EC" id="2.7.8.-" evidence="1"/>
<dbReference type="EMBL" id="BA000016">
    <property type="protein sequence ID" value="BAB81136.1"/>
    <property type="molecule type" value="Genomic_DNA"/>
</dbReference>
<dbReference type="RefSeq" id="WP_011010441.1">
    <property type="nucleotide sequence ID" value="NC_003366.1"/>
</dbReference>
<dbReference type="SMR" id="P0C2E2"/>
<dbReference type="STRING" id="195102.gene:10490694"/>
<dbReference type="KEGG" id="cpe:CPE1430"/>
<dbReference type="HOGENOM" id="CLU_038053_1_1_9"/>
<dbReference type="Proteomes" id="UP000000818">
    <property type="component" value="Chromosome"/>
</dbReference>
<dbReference type="GO" id="GO:0005886">
    <property type="term" value="C:plasma membrane"/>
    <property type="evidence" value="ECO:0007669"/>
    <property type="project" value="UniProtKB-SubCell"/>
</dbReference>
<dbReference type="GO" id="GO:0008808">
    <property type="term" value="F:cardiolipin synthase activity"/>
    <property type="evidence" value="ECO:0007669"/>
    <property type="project" value="InterPro"/>
</dbReference>
<dbReference type="GO" id="GO:0032049">
    <property type="term" value="P:cardiolipin biosynthetic process"/>
    <property type="evidence" value="ECO:0007669"/>
    <property type="project" value="InterPro"/>
</dbReference>
<dbReference type="CDD" id="cd09110">
    <property type="entry name" value="PLDc_CLS_1"/>
    <property type="match status" value="1"/>
</dbReference>
<dbReference type="CDD" id="cd09112">
    <property type="entry name" value="PLDc_CLS_2"/>
    <property type="match status" value="1"/>
</dbReference>
<dbReference type="Gene3D" id="3.30.870.10">
    <property type="entry name" value="Endonuclease Chain A"/>
    <property type="match status" value="2"/>
</dbReference>
<dbReference type="HAMAP" id="MF_01916">
    <property type="entry name" value="Cardiolipin_synth_Cls"/>
    <property type="match status" value="1"/>
</dbReference>
<dbReference type="InterPro" id="IPR030874">
    <property type="entry name" value="Cardiolipin_synth_Firmi"/>
</dbReference>
<dbReference type="InterPro" id="IPR022924">
    <property type="entry name" value="Cardiolipin_synthase"/>
</dbReference>
<dbReference type="InterPro" id="IPR027379">
    <property type="entry name" value="CLS_N"/>
</dbReference>
<dbReference type="InterPro" id="IPR025202">
    <property type="entry name" value="PLD-like_dom"/>
</dbReference>
<dbReference type="InterPro" id="IPR001736">
    <property type="entry name" value="PLipase_D/transphosphatidylase"/>
</dbReference>
<dbReference type="NCBIfam" id="TIGR04265">
    <property type="entry name" value="bac_cardiolipin"/>
    <property type="match status" value="1"/>
</dbReference>
<dbReference type="PANTHER" id="PTHR21248">
    <property type="entry name" value="CARDIOLIPIN SYNTHASE"/>
    <property type="match status" value="1"/>
</dbReference>
<dbReference type="PANTHER" id="PTHR21248:SF22">
    <property type="entry name" value="PHOSPHOLIPASE D"/>
    <property type="match status" value="1"/>
</dbReference>
<dbReference type="Pfam" id="PF13091">
    <property type="entry name" value="PLDc_2"/>
    <property type="match status" value="2"/>
</dbReference>
<dbReference type="Pfam" id="PF13396">
    <property type="entry name" value="PLDc_N"/>
    <property type="match status" value="1"/>
</dbReference>
<dbReference type="SMART" id="SM00155">
    <property type="entry name" value="PLDc"/>
    <property type="match status" value="2"/>
</dbReference>
<dbReference type="SUPFAM" id="SSF56024">
    <property type="entry name" value="Phospholipase D/nuclease"/>
    <property type="match status" value="2"/>
</dbReference>
<dbReference type="PROSITE" id="PS50035">
    <property type="entry name" value="PLD"/>
    <property type="match status" value="2"/>
</dbReference>